<comment type="function">
    <text evidence="1">Catalyzes the hydrolysis of the adenine ring of phosphoribosyl-AMP.</text>
</comment>
<comment type="catalytic activity">
    <reaction evidence="1">
        <text>1-(5-phospho-beta-D-ribosyl)-5'-AMP + H2O = 1-(5-phospho-beta-D-ribosyl)-5-[(5-phospho-beta-D-ribosylamino)methylideneamino]imidazole-4-carboxamide</text>
        <dbReference type="Rhea" id="RHEA:20049"/>
        <dbReference type="ChEBI" id="CHEBI:15377"/>
        <dbReference type="ChEBI" id="CHEBI:58435"/>
        <dbReference type="ChEBI" id="CHEBI:59457"/>
        <dbReference type="EC" id="3.5.4.19"/>
    </reaction>
</comment>
<comment type="cofactor">
    <cofactor evidence="1">
        <name>Mg(2+)</name>
        <dbReference type="ChEBI" id="CHEBI:18420"/>
    </cofactor>
    <text evidence="1">Binds 1 Mg(2+) ion per subunit.</text>
</comment>
<comment type="cofactor">
    <cofactor evidence="1">
        <name>Zn(2+)</name>
        <dbReference type="ChEBI" id="CHEBI:29105"/>
    </cofactor>
    <text evidence="1">Binds 1 zinc ion per subunit.</text>
</comment>
<comment type="pathway">
    <text evidence="1">Amino-acid biosynthesis; L-histidine biosynthesis; L-histidine from 5-phospho-alpha-D-ribose 1-diphosphate: step 3/9.</text>
</comment>
<comment type="subunit">
    <text evidence="1">Homodimer.</text>
</comment>
<comment type="subcellular location">
    <subcellularLocation>
        <location evidence="1">Cytoplasm</location>
    </subcellularLocation>
</comment>
<comment type="similarity">
    <text evidence="1">Belongs to the PRA-CH family.</text>
</comment>
<accession>Q47AM4</accession>
<reference key="1">
    <citation type="journal article" date="2009" name="BMC Genomics">
        <title>Metabolic analysis of the soil microbe Dechloromonas aromatica str. RCB: indications of a surprisingly complex life-style and cryptic anaerobic pathways for aromatic degradation.</title>
        <authorList>
            <person name="Salinero K.K."/>
            <person name="Keller K."/>
            <person name="Feil W.S."/>
            <person name="Feil H."/>
            <person name="Trong S."/>
            <person name="Di Bartolo G."/>
            <person name="Lapidus A."/>
        </authorList>
    </citation>
    <scope>NUCLEOTIDE SEQUENCE [LARGE SCALE GENOMIC DNA]</scope>
    <source>
        <strain>RCB</strain>
    </source>
</reference>
<proteinExistence type="inferred from homology"/>
<keyword id="KW-0028">Amino-acid biosynthesis</keyword>
<keyword id="KW-0963">Cytoplasm</keyword>
<keyword id="KW-0368">Histidine biosynthesis</keyword>
<keyword id="KW-0378">Hydrolase</keyword>
<keyword id="KW-0460">Magnesium</keyword>
<keyword id="KW-0479">Metal-binding</keyword>
<keyword id="KW-0862">Zinc</keyword>
<gene>
    <name evidence="1" type="primary">hisI</name>
    <name type="ordered locus">Daro_3378</name>
</gene>
<evidence type="ECO:0000255" key="1">
    <source>
        <dbReference type="HAMAP-Rule" id="MF_01021"/>
    </source>
</evidence>
<feature type="chain" id="PRO_0000229819" description="Phosphoribosyl-AMP cyclohydrolase">
    <location>
        <begin position="1"/>
        <end position="132"/>
    </location>
</feature>
<feature type="binding site" evidence="1">
    <location>
        <position position="82"/>
    </location>
    <ligand>
        <name>Mg(2+)</name>
        <dbReference type="ChEBI" id="CHEBI:18420"/>
    </ligand>
</feature>
<feature type="binding site" evidence="1">
    <location>
        <position position="83"/>
    </location>
    <ligand>
        <name>Zn(2+)</name>
        <dbReference type="ChEBI" id="CHEBI:29105"/>
        <note>ligand shared between dimeric partners</note>
    </ligand>
</feature>
<feature type="binding site" evidence="1">
    <location>
        <position position="84"/>
    </location>
    <ligand>
        <name>Mg(2+)</name>
        <dbReference type="ChEBI" id="CHEBI:18420"/>
    </ligand>
</feature>
<feature type="binding site" evidence="1">
    <location>
        <position position="86"/>
    </location>
    <ligand>
        <name>Mg(2+)</name>
        <dbReference type="ChEBI" id="CHEBI:18420"/>
    </ligand>
</feature>
<feature type="binding site" evidence="1">
    <location>
        <position position="100"/>
    </location>
    <ligand>
        <name>Zn(2+)</name>
        <dbReference type="ChEBI" id="CHEBI:29105"/>
        <note>ligand shared between dimeric partners</note>
    </ligand>
</feature>
<feature type="binding site" evidence="1">
    <location>
        <position position="107"/>
    </location>
    <ligand>
        <name>Zn(2+)</name>
        <dbReference type="ChEBI" id="CHEBI:29105"/>
        <note>ligand shared between dimeric partners</note>
    </ligand>
</feature>
<sequence>MADLDNSQDWLEALKWDADGMIPAIAQDENGRVVMFAYMNRDSLQETVLCGNAVYWSRSRKRLWRKGEESGHFQKVNSIRTDCDGDVLLLSIEQVGGIACHTGRESCFFNELNGDRWIPADPVLKDPKEIYK</sequence>
<protein>
    <recommendedName>
        <fullName evidence="1">Phosphoribosyl-AMP cyclohydrolase</fullName>
        <shortName evidence="1">PRA-CH</shortName>
        <ecNumber evidence="1">3.5.4.19</ecNumber>
    </recommendedName>
</protein>
<name>HIS3_DECAR</name>
<organism>
    <name type="scientific">Dechloromonas aromatica (strain RCB)</name>
    <dbReference type="NCBI Taxonomy" id="159087"/>
    <lineage>
        <taxon>Bacteria</taxon>
        <taxon>Pseudomonadati</taxon>
        <taxon>Pseudomonadota</taxon>
        <taxon>Betaproteobacteria</taxon>
        <taxon>Rhodocyclales</taxon>
        <taxon>Azonexaceae</taxon>
        <taxon>Dechloromonas</taxon>
    </lineage>
</organism>
<dbReference type="EC" id="3.5.4.19" evidence="1"/>
<dbReference type="EMBL" id="CP000089">
    <property type="protein sequence ID" value="AAZ48107.1"/>
    <property type="molecule type" value="Genomic_DNA"/>
</dbReference>
<dbReference type="SMR" id="Q47AM4"/>
<dbReference type="STRING" id="159087.Daro_3378"/>
<dbReference type="KEGG" id="dar:Daro_3378"/>
<dbReference type="eggNOG" id="COG0139">
    <property type="taxonomic scope" value="Bacteria"/>
</dbReference>
<dbReference type="HOGENOM" id="CLU_048577_5_0_4"/>
<dbReference type="OrthoDB" id="9795769at2"/>
<dbReference type="UniPathway" id="UPA00031">
    <property type="reaction ID" value="UER00008"/>
</dbReference>
<dbReference type="GO" id="GO:0005737">
    <property type="term" value="C:cytoplasm"/>
    <property type="evidence" value="ECO:0007669"/>
    <property type="project" value="UniProtKB-SubCell"/>
</dbReference>
<dbReference type="GO" id="GO:0000287">
    <property type="term" value="F:magnesium ion binding"/>
    <property type="evidence" value="ECO:0007669"/>
    <property type="project" value="UniProtKB-UniRule"/>
</dbReference>
<dbReference type="GO" id="GO:0004635">
    <property type="term" value="F:phosphoribosyl-AMP cyclohydrolase activity"/>
    <property type="evidence" value="ECO:0007669"/>
    <property type="project" value="UniProtKB-UniRule"/>
</dbReference>
<dbReference type="GO" id="GO:0008270">
    <property type="term" value="F:zinc ion binding"/>
    <property type="evidence" value="ECO:0007669"/>
    <property type="project" value="UniProtKB-UniRule"/>
</dbReference>
<dbReference type="GO" id="GO:0000105">
    <property type="term" value="P:L-histidine biosynthetic process"/>
    <property type="evidence" value="ECO:0007669"/>
    <property type="project" value="UniProtKB-UniRule"/>
</dbReference>
<dbReference type="FunFam" id="3.10.20.810:FF:000001">
    <property type="entry name" value="Histidine biosynthesis bifunctional protein HisIE"/>
    <property type="match status" value="1"/>
</dbReference>
<dbReference type="Gene3D" id="3.10.20.810">
    <property type="entry name" value="Phosphoribosyl-AMP cyclohydrolase"/>
    <property type="match status" value="1"/>
</dbReference>
<dbReference type="HAMAP" id="MF_01021">
    <property type="entry name" value="HisI"/>
    <property type="match status" value="1"/>
</dbReference>
<dbReference type="InterPro" id="IPR026660">
    <property type="entry name" value="PRA-CH"/>
</dbReference>
<dbReference type="InterPro" id="IPR002496">
    <property type="entry name" value="PRib_AMP_CycHydrolase_dom"/>
</dbReference>
<dbReference type="InterPro" id="IPR038019">
    <property type="entry name" value="PRib_AMP_CycHydrolase_sf"/>
</dbReference>
<dbReference type="NCBIfam" id="NF000768">
    <property type="entry name" value="PRK00051.1"/>
    <property type="match status" value="1"/>
</dbReference>
<dbReference type="PANTHER" id="PTHR42945">
    <property type="entry name" value="HISTIDINE BIOSYNTHESIS BIFUNCTIONAL PROTEIN"/>
    <property type="match status" value="1"/>
</dbReference>
<dbReference type="PANTHER" id="PTHR42945:SF1">
    <property type="entry name" value="HISTIDINE BIOSYNTHESIS BIFUNCTIONAL PROTEIN HIS7"/>
    <property type="match status" value="1"/>
</dbReference>
<dbReference type="Pfam" id="PF01502">
    <property type="entry name" value="PRA-CH"/>
    <property type="match status" value="1"/>
</dbReference>
<dbReference type="SUPFAM" id="SSF141734">
    <property type="entry name" value="HisI-like"/>
    <property type="match status" value="1"/>
</dbReference>